<keyword id="KW-0687">Ribonucleoprotein</keyword>
<keyword id="KW-0689">Ribosomal protein</keyword>
<keyword id="KW-0694">RNA-binding</keyword>
<keyword id="KW-0699">rRNA-binding</keyword>
<dbReference type="EMBL" id="CP000075">
    <property type="protein sequence ID" value="AAY35654.1"/>
    <property type="molecule type" value="Genomic_DNA"/>
</dbReference>
<dbReference type="RefSeq" id="WP_003317208.1">
    <property type="nucleotide sequence ID" value="NC_007005.1"/>
</dbReference>
<dbReference type="RefSeq" id="YP_233692.1">
    <property type="nucleotide sequence ID" value="NC_007005.1"/>
</dbReference>
<dbReference type="SMR" id="Q4ZYW8"/>
<dbReference type="STRING" id="205918.Psyr_0584"/>
<dbReference type="GeneID" id="96216921"/>
<dbReference type="KEGG" id="psb:Psyr_0584"/>
<dbReference type="PATRIC" id="fig|205918.7.peg.607"/>
<dbReference type="eggNOG" id="COG0359">
    <property type="taxonomic scope" value="Bacteria"/>
</dbReference>
<dbReference type="HOGENOM" id="CLU_078938_4_1_6"/>
<dbReference type="OrthoDB" id="9788336at2"/>
<dbReference type="Proteomes" id="UP000000426">
    <property type="component" value="Chromosome"/>
</dbReference>
<dbReference type="GO" id="GO:1990904">
    <property type="term" value="C:ribonucleoprotein complex"/>
    <property type="evidence" value="ECO:0007669"/>
    <property type="project" value="UniProtKB-KW"/>
</dbReference>
<dbReference type="GO" id="GO:0005840">
    <property type="term" value="C:ribosome"/>
    <property type="evidence" value="ECO:0007669"/>
    <property type="project" value="UniProtKB-KW"/>
</dbReference>
<dbReference type="GO" id="GO:0019843">
    <property type="term" value="F:rRNA binding"/>
    <property type="evidence" value="ECO:0007669"/>
    <property type="project" value="UniProtKB-UniRule"/>
</dbReference>
<dbReference type="GO" id="GO:0003735">
    <property type="term" value="F:structural constituent of ribosome"/>
    <property type="evidence" value="ECO:0007669"/>
    <property type="project" value="InterPro"/>
</dbReference>
<dbReference type="GO" id="GO:0006412">
    <property type="term" value="P:translation"/>
    <property type="evidence" value="ECO:0007669"/>
    <property type="project" value="UniProtKB-UniRule"/>
</dbReference>
<dbReference type="Gene3D" id="3.10.430.100">
    <property type="entry name" value="Ribosomal protein L9, C-terminal domain"/>
    <property type="match status" value="1"/>
</dbReference>
<dbReference type="Gene3D" id="3.40.5.10">
    <property type="entry name" value="Ribosomal protein L9, N-terminal domain"/>
    <property type="match status" value="1"/>
</dbReference>
<dbReference type="HAMAP" id="MF_00503">
    <property type="entry name" value="Ribosomal_bL9"/>
    <property type="match status" value="1"/>
</dbReference>
<dbReference type="InterPro" id="IPR000244">
    <property type="entry name" value="Ribosomal_bL9"/>
</dbReference>
<dbReference type="InterPro" id="IPR009027">
    <property type="entry name" value="Ribosomal_bL9/RNase_H1_N"/>
</dbReference>
<dbReference type="InterPro" id="IPR020594">
    <property type="entry name" value="Ribosomal_bL9_bac/chp"/>
</dbReference>
<dbReference type="InterPro" id="IPR020069">
    <property type="entry name" value="Ribosomal_bL9_C"/>
</dbReference>
<dbReference type="InterPro" id="IPR036791">
    <property type="entry name" value="Ribosomal_bL9_C_sf"/>
</dbReference>
<dbReference type="InterPro" id="IPR020070">
    <property type="entry name" value="Ribosomal_bL9_N"/>
</dbReference>
<dbReference type="InterPro" id="IPR036935">
    <property type="entry name" value="Ribosomal_bL9_N_sf"/>
</dbReference>
<dbReference type="NCBIfam" id="TIGR00158">
    <property type="entry name" value="L9"/>
    <property type="match status" value="1"/>
</dbReference>
<dbReference type="PANTHER" id="PTHR21368">
    <property type="entry name" value="50S RIBOSOMAL PROTEIN L9"/>
    <property type="match status" value="1"/>
</dbReference>
<dbReference type="Pfam" id="PF03948">
    <property type="entry name" value="Ribosomal_L9_C"/>
    <property type="match status" value="1"/>
</dbReference>
<dbReference type="Pfam" id="PF01281">
    <property type="entry name" value="Ribosomal_L9_N"/>
    <property type="match status" value="1"/>
</dbReference>
<dbReference type="SUPFAM" id="SSF55658">
    <property type="entry name" value="L9 N-domain-like"/>
    <property type="match status" value="1"/>
</dbReference>
<dbReference type="SUPFAM" id="SSF55653">
    <property type="entry name" value="Ribosomal protein L9 C-domain"/>
    <property type="match status" value="1"/>
</dbReference>
<dbReference type="PROSITE" id="PS00651">
    <property type="entry name" value="RIBOSOMAL_L9"/>
    <property type="match status" value="1"/>
</dbReference>
<gene>
    <name evidence="1" type="primary">rplI</name>
    <name type="ordered locus">Psyr_0584</name>
</gene>
<proteinExistence type="inferred from homology"/>
<evidence type="ECO:0000255" key="1">
    <source>
        <dbReference type="HAMAP-Rule" id="MF_00503"/>
    </source>
</evidence>
<evidence type="ECO:0000305" key="2"/>
<protein>
    <recommendedName>
        <fullName evidence="1">Large ribosomal subunit protein bL9</fullName>
    </recommendedName>
    <alternativeName>
        <fullName evidence="2">50S ribosomal protein L9</fullName>
    </alternativeName>
</protein>
<accession>Q4ZYW8</accession>
<sequence length="148" mass="15471">MQLILLEKVANLGNLGDKVNVKAGYGRNYLLPYGKATAATAANVAAFEERRAELEKLAADKKASAETRAAQLAELEVTITATAGDEGKLFGSIGTHDIADALTASGVEVAKSEVRLPNGTIRNVGEFDVAVHLHSDVEATVRVVVVAA</sequence>
<feature type="chain" id="PRO_0000236574" description="Large ribosomal subunit protein bL9">
    <location>
        <begin position="1"/>
        <end position="148"/>
    </location>
</feature>
<organism>
    <name type="scientific">Pseudomonas syringae pv. syringae (strain B728a)</name>
    <dbReference type="NCBI Taxonomy" id="205918"/>
    <lineage>
        <taxon>Bacteria</taxon>
        <taxon>Pseudomonadati</taxon>
        <taxon>Pseudomonadota</taxon>
        <taxon>Gammaproteobacteria</taxon>
        <taxon>Pseudomonadales</taxon>
        <taxon>Pseudomonadaceae</taxon>
        <taxon>Pseudomonas</taxon>
        <taxon>Pseudomonas syringae</taxon>
    </lineage>
</organism>
<comment type="function">
    <text evidence="1">Binds to the 23S rRNA.</text>
</comment>
<comment type="similarity">
    <text evidence="1">Belongs to the bacterial ribosomal protein bL9 family.</text>
</comment>
<name>RL9_PSEU2</name>
<reference key="1">
    <citation type="journal article" date="2005" name="Proc. Natl. Acad. Sci. U.S.A.">
        <title>Comparison of the complete genome sequences of Pseudomonas syringae pv. syringae B728a and pv. tomato DC3000.</title>
        <authorList>
            <person name="Feil H."/>
            <person name="Feil W.S."/>
            <person name="Chain P."/>
            <person name="Larimer F."/>
            <person name="Dibartolo G."/>
            <person name="Copeland A."/>
            <person name="Lykidis A."/>
            <person name="Trong S."/>
            <person name="Nolan M."/>
            <person name="Goltsman E."/>
            <person name="Thiel J."/>
            <person name="Malfatti S."/>
            <person name="Loper J.E."/>
            <person name="Lapidus A."/>
            <person name="Detter J.C."/>
            <person name="Land M."/>
            <person name="Richardson P.M."/>
            <person name="Kyrpides N.C."/>
            <person name="Ivanova N."/>
            <person name="Lindow S.E."/>
        </authorList>
    </citation>
    <scope>NUCLEOTIDE SEQUENCE [LARGE SCALE GENOMIC DNA]</scope>
    <source>
        <strain>B728a</strain>
    </source>
</reference>